<comment type="subcellular location">
    <subcellularLocation>
        <location evidence="2">Secreted</location>
    </subcellularLocation>
</comment>
<comment type="similarity">
    <text evidence="2">Belongs to the NXPE family.</text>
</comment>
<sequence>MWINFVKLRLFCCLLAVLMVVVLVVNVTQVEYLDRETASATFIDSGGQFVSSQVIRISRNPYCGYERQILSSRERLEEDSLLAALQWQEPDVGPVPFLKSTDPSSSYFVILNSAAFFRVGSQLEVLVHVQDFQRKPKKYGGDYLQARIHSPKLQAGAVGRVVDYQNGFYKVFFTLLWPGQVKVSISLVHPSEGIRVLQYLQEKKPDRVYFKSLFRSGRISETTECNVCLPGSLPLCNFTDLYTGEPWFCFKPKKLPCSSRINHFKGGYLKGLLTATENAFFQSGVNIKMPINSSGPDWVTVIPRNIKETNSLELSQGLGTFPSGYYYKDQWRPRRFKMRQFNDPDNITECLQRKVVYLFGDSTIRQWFEYLTTFVPDLVEFNLGSPKNVGPFLAVDQKHNILLKYRCHGPPIRFTTVFSSDLRYVANELNGIVGGKNTVVAIAVWSHFSTFPLEVYIRRLRNIRRAVVQLLDRSPKTVVVIRTANVQELGPEISLFNSDWYNFQLDTILRKMFSGVGVYLVDAWEMTLAHYLPHKLHPDEVIVKNQVDMFLSFVCPLET</sequence>
<dbReference type="EMBL" id="BC133340">
    <property type="protein sequence ID" value="AAI33341.1"/>
    <property type="molecule type" value="mRNA"/>
</dbReference>
<dbReference type="RefSeq" id="NP_001074998.1">
    <property type="nucleotide sequence ID" value="NM_001081529.2"/>
</dbReference>
<dbReference type="RefSeq" id="XP_005201290.1">
    <property type="nucleotide sequence ID" value="XM_005201233.5"/>
</dbReference>
<dbReference type="RefSeq" id="XP_005201291.1">
    <property type="nucleotide sequence ID" value="XM_005201234.5"/>
</dbReference>
<dbReference type="RefSeq" id="XP_010799331.1">
    <property type="nucleotide sequence ID" value="XM_010801029.2"/>
</dbReference>
<dbReference type="RefSeq" id="XP_024845800.1">
    <property type="nucleotide sequence ID" value="XM_024990032.2"/>
</dbReference>
<dbReference type="FunCoup" id="A2VDP6">
    <property type="interactions" value="703"/>
</dbReference>
<dbReference type="STRING" id="9913.ENSBTAP00000071138"/>
<dbReference type="GlyCosmos" id="A2VDP6">
    <property type="glycosylation" value="3 sites, No reported glycans"/>
</dbReference>
<dbReference type="GlyGen" id="A2VDP6">
    <property type="glycosylation" value="3 sites"/>
</dbReference>
<dbReference type="PaxDb" id="9913-ENSBTAP00000017908"/>
<dbReference type="Ensembl" id="ENSBTAT00000078164.2">
    <property type="protein sequence ID" value="ENSBTAP00000071138.1"/>
    <property type="gene ID" value="ENSBTAG00000013465.7"/>
</dbReference>
<dbReference type="GeneID" id="532838"/>
<dbReference type="KEGG" id="bta:532838"/>
<dbReference type="CTD" id="91775"/>
<dbReference type="VEuPathDB" id="HostDB:ENSBTAG00000013465"/>
<dbReference type="VGNC" id="VGNC:32380">
    <property type="gene designation" value="NXPE3"/>
</dbReference>
<dbReference type="eggNOG" id="ENOG502QUD6">
    <property type="taxonomic scope" value="Eukaryota"/>
</dbReference>
<dbReference type="GeneTree" id="ENSGT00950000182866"/>
<dbReference type="HOGENOM" id="CLU_031119_2_0_1"/>
<dbReference type="InParanoid" id="A2VDP6"/>
<dbReference type="OMA" id="IVKPRPF"/>
<dbReference type="OrthoDB" id="5950832at2759"/>
<dbReference type="TreeFam" id="TF329555"/>
<dbReference type="Proteomes" id="UP000009136">
    <property type="component" value="Chromosome 1"/>
</dbReference>
<dbReference type="Bgee" id="ENSBTAG00000013465">
    <property type="expression patterns" value="Expressed in vas deferens and 103 other cell types or tissues"/>
</dbReference>
<dbReference type="GO" id="GO:0005576">
    <property type="term" value="C:extracellular region"/>
    <property type="evidence" value="ECO:0007669"/>
    <property type="project" value="UniProtKB-SubCell"/>
</dbReference>
<dbReference type="InterPro" id="IPR014756">
    <property type="entry name" value="Ig_E-set"/>
</dbReference>
<dbReference type="InterPro" id="IPR057106">
    <property type="entry name" value="NXPE4_C"/>
</dbReference>
<dbReference type="InterPro" id="IPR026845">
    <property type="entry name" value="NXPH/NXPE"/>
</dbReference>
<dbReference type="PANTHER" id="PTHR16165">
    <property type="entry name" value="NXPE FAMILY MEMBER"/>
    <property type="match status" value="1"/>
</dbReference>
<dbReference type="PANTHER" id="PTHR16165:SF9">
    <property type="entry name" value="NXPE FAMILY MEMBER 3"/>
    <property type="match status" value="1"/>
</dbReference>
<dbReference type="Pfam" id="PF06312">
    <property type="entry name" value="Neurexophilin"/>
    <property type="match status" value="1"/>
</dbReference>
<dbReference type="Pfam" id="PF24536">
    <property type="entry name" value="NXPE4_C"/>
    <property type="match status" value="1"/>
</dbReference>
<dbReference type="SUPFAM" id="SSF81296">
    <property type="entry name" value="E set domains"/>
    <property type="match status" value="1"/>
</dbReference>
<proteinExistence type="evidence at transcript level"/>
<evidence type="ECO:0000255" key="1"/>
<evidence type="ECO:0000305" key="2"/>
<reference key="1">
    <citation type="submission" date="2007-02" db="EMBL/GenBank/DDBJ databases">
        <authorList>
            <consortium name="NIH - Mammalian Gene Collection (MGC) project"/>
        </authorList>
    </citation>
    <scope>NUCLEOTIDE SEQUENCE [LARGE SCALE MRNA]</scope>
    <source>
        <strain>Hereford</strain>
        <tissue>Hypothalamus</tissue>
    </source>
</reference>
<organism>
    <name type="scientific">Bos taurus</name>
    <name type="common">Bovine</name>
    <dbReference type="NCBI Taxonomy" id="9913"/>
    <lineage>
        <taxon>Eukaryota</taxon>
        <taxon>Metazoa</taxon>
        <taxon>Chordata</taxon>
        <taxon>Craniata</taxon>
        <taxon>Vertebrata</taxon>
        <taxon>Euteleostomi</taxon>
        <taxon>Mammalia</taxon>
        <taxon>Eutheria</taxon>
        <taxon>Laurasiatheria</taxon>
        <taxon>Artiodactyla</taxon>
        <taxon>Ruminantia</taxon>
        <taxon>Pecora</taxon>
        <taxon>Bovidae</taxon>
        <taxon>Bovinae</taxon>
        <taxon>Bos</taxon>
    </lineage>
</organism>
<feature type="signal peptide" evidence="1">
    <location>
        <begin position="1"/>
        <end position="30"/>
    </location>
</feature>
<feature type="chain" id="PRO_0000297593" description="NXPE family member 3">
    <location>
        <begin position="31"/>
        <end position="559"/>
    </location>
</feature>
<feature type="glycosylation site" description="N-linked (GlcNAc...) asparagine" evidence="1">
    <location>
        <position position="26"/>
    </location>
</feature>
<feature type="glycosylation site" description="N-linked (GlcNAc...) asparagine" evidence="1">
    <location>
        <position position="237"/>
    </location>
</feature>
<feature type="glycosylation site" description="N-linked (GlcNAc...) asparagine" evidence="1">
    <location>
        <position position="346"/>
    </location>
</feature>
<protein>
    <recommendedName>
        <fullName>NXPE family member 3</fullName>
    </recommendedName>
    <alternativeName>
        <fullName>Protein FAM55C</fullName>
    </alternativeName>
</protein>
<keyword id="KW-0325">Glycoprotein</keyword>
<keyword id="KW-1185">Reference proteome</keyword>
<keyword id="KW-0964">Secreted</keyword>
<keyword id="KW-0732">Signal</keyword>
<accession>A2VDP6</accession>
<gene>
    <name type="primary">NXPE3</name>
    <name type="synonym">FAM55C</name>
</gene>
<name>NXPE3_BOVIN</name>